<sequence>MASATIKVTQTRSTIGILEKHKATMRGLGLRRIGHTVELEDTPAVRGMVNKVNYLVRVEGE</sequence>
<feature type="chain" id="PRO_0000273767" description="Large ribosomal subunit protein uL30">
    <location>
        <begin position="1"/>
        <end position="61"/>
    </location>
</feature>
<protein>
    <recommendedName>
        <fullName evidence="1">Large ribosomal subunit protein uL30</fullName>
    </recommendedName>
    <alternativeName>
        <fullName evidence="2">50S ribosomal protein L30</fullName>
    </alternativeName>
</protein>
<evidence type="ECO:0000255" key="1">
    <source>
        <dbReference type="HAMAP-Rule" id="MF_01371"/>
    </source>
</evidence>
<evidence type="ECO:0000305" key="2"/>
<comment type="subunit">
    <text evidence="1">Part of the 50S ribosomal subunit.</text>
</comment>
<comment type="similarity">
    <text evidence="1">Belongs to the universal ribosomal protein uL30 family.</text>
</comment>
<gene>
    <name evidence="1" type="primary">rpmD</name>
    <name type="ordered locus">Csal_0439</name>
</gene>
<name>RL30_CHRSD</name>
<reference key="1">
    <citation type="journal article" date="2011" name="Stand. Genomic Sci.">
        <title>Complete genome sequence of the halophilic and highly halotolerant Chromohalobacter salexigens type strain (1H11(T)).</title>
        <authorList>
            <person name="Copeland A."/>
            <person name="O'Connor K."/>
            <person name="Lucas S."/>
            <person name="Lapidus A."/>
            <person name="Berry K.W."/>
            <person name="Detter J.C."/>
            <person name="Del Rio T.G."/>
            <person name="Hammon N."/>
            <person name="Dalin E."/>
            <person name="Tice H."/>
            <person name="Pitluck S."/>
            <person name="Bruce D."/>
            <person name="Goodwin L."/>
            <person name="Han C."/>
            <person name="Tapia R."/>
            <person name="Saunders E."/>
            <person name="Schmutz J."/>
            <person name="Brettin T."/>
            <person name="Larimer F."/>
            <person name="Land M."/>
            <person name="Hauser L."/>
            <person name="Vargas C."/>
            <person name="Nieto J.J."/>
            <person name="Kyrpides N.C."/>
            <person name="Ivanova N."/>
            <person name="Goker M."/>
            <person name="Klenk H.P."/>
            <person name="Csonka L.N."/>
            <person name="Woyke T."/>
        </authorList>
    </citation>
    <scope>NUCLEOTIDE SEQUENCE [LARGE SCALE GENOMIC DNA]</scope>
    <source>
        <strain>ATCC BAA-138 / DSM 3043 / CIP 106854 / NCIMB 13768 / 1H11</strain>
    </source>
</reference>
<keyword id="KW-1185">Reference proteome</keyword>
<keyword id="KW-0687">Ribonucleoprotein</keyword>
<keyword id="KW-0689">Ribosomal protein</keyword>
<proteinExistence type="inferred from homology"/>
<dbReference type="EMBL" id="CP000285">
    <property type="protein sequence ID" value="ABE57801.1"/>
    <property type="molecule type" value="Genomic_DNA"/>
</dbReference>
<dbReference type="RefSeq" id="WP_011505747.1">
    <property type="nucleotide sequence ID" value="NC_007963.1"/>
</dbReference>
<dbReference type="SMR" id="Q1R0F7"/>
<dbReference type="STRING" id="290398.Csal_0439"/>
<dbReference type="GeneID" id="95333192"/>
<dbReference type="KEGG" id="csa:Csal_0439"/>
<dbReference type="eggNOG" id="COG1841">
    <property type="taxonomic scope" value="Bacteria"/>
</dbReference>
<dbReference type="HOGENOM" id="CLU_131047_1_4_6"/>
<dbReference type="OrthoDB" id="9812790at2"/>
<dbReference type="Proteomes" id="UP000000239">
    <property type="component" value="Chromosome"/>
</dbReference>
<dbReference type="GO" id="GO:0022625">
    <property type="term" value="C:cytosolic large ribosomal subunit"/>
    <property type="evidence" value="ECO:0007669"/>
    <property type="project" value="TreeGrafter"/>
</dbReference>
<dbReference type="GO" id="GO:0003735">
    <property type="term" value="F:structural constituent of ribosome"/>
    <property type="evidence" value="ECO:0007669"/>
    <property type="project" value="InterPro"/>
</dbReference>
<dbReference type="GO" id="GO:0006412">
    <property type="term" value="P:translation"/>
    <property type="evidence" value="ECO:0007669"/>
    <property type="project" value="UniProtKB-UniRule"/>
</dbReference>
<dbReference type="CDD" id="cd01658">
    <property type="entry name" value="Ribosomal_L30"/>
    <property type="match status" value="1"/>
</dbReference>
<dbReference type="FunFam" id="3.30.1390.20:FF:000001">
    <property type="entry name" value="50S ribosomal protein L30"/>
    <property type="match status" value="1"/>
</dbReference>
<dbReference type="Gene3D" id="3.30.1390.20">
    <property type="entry name" value="Ribosomal protein L30, ferredoxin-like fold domain"/>
    <property type="match status" value="1"/>
</dbReference>
<dbReference type="HAMAP" id="MF_01371_B">
    <property type="entry name" value="Ribosomal_uL30_B"/>
    <property type="match status" value="1"/>
</dbReference>
<dbReference type="InterPro" id="IPR036919">
    <property type="entry name" value="Ribo_uL30_ferredoxin-like_sf"/>
</dbReference>
<dbReference type="InterPro" id="IPR005996">
    <property type="entry name" value="Ribosomal_uL30_bac-type"/>
</dbReference>
<dbReference type="InterPro" id="IPR018038">
    <property type="entry name" value="Ribosomal_uL30_CS"/>
</dbReference>
<dbReference type="InterPro" id="IPR016082">
    <property type="entry name" value="Ribosomal_uL30_ferredoxin-like"/>
</dbReference>
<dbReference type="NCBIfam" id="TIGR01308">
    <property type="entry name" value="rpmD_bact"/>
    <property type="match status" value="1"/>
</dbReference>
<dbReference type="PANTHER" id="PTHR15892:SF2">
    <property type="entry name" value="LARGE RIBOSOMAL SUBUNIT PROTEIN UL30M"/>
    <property type="match status" value="1"/>
</dbReference>
<dbReference type="PANTHER" id="PTHR15892">
    <property type="entry name" value="MITOCHONDRIAL RIBOSOMAL PROTEIN L30"/>
    <property type="match status" value="1"/>
</dbReference>
<dbReference type="Pfam" id="PF00327">
    <property type="entry name" value="Ribosomal_L30"/>
    <property type="match status" value="1"/>
</dbReference>
<dbReference type="PIRSF" id="PIRSF002211">
    <property type="entry name" value="Ribosomal_L30_bac-type"/>
    <property type="match status" value="1"/>
</dbReference>
<dbReference type="SUPFAM" id="SSF55129">
    <property type="entry name" value="Ribosomal protein L30p/L7e"/>
    <property type="match status" value="1"/>
</dbReference>
<dbReference type="PROSITE" id="PS00634">
    <property type="entry name" value="RIBOSOMAL_L30"/>
    <property type="match status" value="1"/>
</dbReference>
<organism>
    <name type="scientific">Chromohalobacter salexigens (strain ATCC BAA-138 / DSM 3043 / CIP 106854 / NCIMB 13768 / 1H11)</name>
    <dbReference type="NCBI Taxonomy" id="290398"/>
    <lineage>
        <taxon>Bacteria</taxon>
        <taxon>Pseudomonadati</taxon>
        <taxon>Pseudomonadota</taxon>
        <taxon>Gammaproteobacteria</taxon>
        <taxon>Oceanospirillales</taxon>
        <taxon>Halomonadaceae</taxon>
        <taxon>Chromohalobacter</taxon>
    </lineage>
</organism>
<accession>Q1R0F7</accession>